<keyword id="KW-0274">FAD</keyword>
<keyword id="KW-0285">Flavoprotein</keyword>
<keyword id="KW-0520">NAD</keyword>
<keyword id="KW-0560">Oxidoreductase</keyword>
<proteinExistence type="inferred from homology"/>
<accession>B0RNU9</accession>
<organism>
    <name type="scientific">Xanthomonas campestris pv. campestris (strain B100)</name>
    <dbReference type="NCBI Taxonomy" id="509169"/>
    <lineage>
        <taxon>Bacteria</taxon>
        <taxon>Pseudomonadati</taxon>
        <taxon>Pseudomonadota</taxon>
        <taxon>Gammaproteobacteria</taxon>
        <taxon>Lysobacterales</taxon>
        <taxon>Lysobacteraceae</taxon>
        <taxon>Xanthomonas</taxon>
    </lineage>
</organism>
<gene>
    <name evidence="1" type="primary">betA</name>
    <name type="ordered locus">xcc-b100_0793</name>
</gene>
<dbReference type="EC" id="1.1.99.1" evidence="1"/>
<dbReference type="EC" id="1.2.1.8" evidence="1"/>
<dbReference type="EMBL" id="AM920689">
    <property type="protein sequence ID" value="CAP50134.1"/>
    <property type="molecule type" value="Genomic_DNA"/>
</dbReference>
<dbReference type="SMR" id="B0RNU9"/>
<dbReference type="KEGG" id="xca:xcc-b100_0793"/>
<dbReference type="HOGENOM" id="CLU_002865_7_1_6"/>
<dbReference type="UniPathway" id="UPA00529">
    <property type="reaction ID" value="UER00385"/>
</dbReference>
<dbReference type="Proteomes" id="UP000001188">
    <property type="component" value="Chromosome"/>
</dbReference>
<dbReference type="GO" id="GO:0016020">
    <property type="term" value="C:membrane"/>
    <property type="evidence" value="ECO:0007669"/>
    <property type="project" value="TreeGrafter"/>
</dbReference>
<dbReference type="GO" id="GO:0008802">
    <property type="term" value="F:betaine-aldehyde dehydrogenase (NAD+) activity"/>
    <property type="evidence" value="ECO:0007669"/>
    <property type="project" value="UniProtKB-EC"/>
</dbReference>
<dbReference type="GO" id="GO:0008812">
    <property type="term" value="F:choline dehydrogenase activity"/>
    <property type="evidence" value="ECO:0007669"/>
    <property type="project" value="UniProtKB-UniRule"/>
</dbReference>
<dbReference type="GO" id="GO:0050660">
    <property type="term" value="F:flavin adenine dinucleotide binding"/>
    <property type="evidence" value="ECO:0007669"/>
    <property type="project" value="InterPro"/>
</dbReference>
<dbReference type="GO" id="GO:0019285">
    <property type="term" value="P:glycine betaine biosynthetic process from choline"/>
    <property type="evidence" value="ECO:0007669"/>
    <property type="project" value="UniProtKB-UniRule"/>
</dbReference>
<dbReference type="Gene3D" id="3.50.50.60">
    <property type="entry name" value="FAD/NAD(P)-binding domain"/>
    <property type="match status" value="1"/>
</dbReference>
<dbReference type="Gene3D" id="3.30.560.10">
    <property type="entry name" value="Glucose Oxidase, domain 3"/>
    <property type="match status" value="1"/>
</dbReference>
<dbReference type="HAMAP" id="MF_00750">
    <property type="entry name" value="Choline_dehydrogen"/>
    <property type="match status" value="1"/>
</dbReference>
<dbReference type="InterPro" id="IPR011533">
    <property type="entry name" value="BetA"/>
</dbReference>
<dbReference type="InterPro" id="IPR036188">
    <property type="entry name" value="FAD/NAD-bd_sf"/>
</dbReference>
<dbReference type="InterPro" id="IPR012132">
    <property type="entry name" value="GMC_OxRdtase"/>
</dbReference>
<dbReference type="InterPro" id="IPR000172">
    <property type="entry name" value="GMC_OxRdtase_N"/>
</dbReference>
<dbReference type="InterPro" id="IPR007867">
    <property type="entry name" value="GMC_OxRtase_C"/>
</dbReference>
<dbReference type="NCBIfam" id="TIGR01810">
    <property type="entry name" value="betA"/>
    <property type="match status" value="1"/>
</dbReference>
<dbReference type="NCBIfam" id="NF002550">
    <property type="entry name" value="PRK02106.1"/>
    <property type="match status" value="1"/>
</dbReference>
<dbReference type="PANTHER" id="PTHR11552:SF147">
    <property type="entry name" value="CHOLINE DEHYDROGENASE, MITOCHONDRIAL"/>
    <property type="match status" value="1"/>
</dbReference>
<dbReference type="PANTHER" id="PTHR11552">
    <property type="entry name" value="GLUCOSE-METHANOL-CHOLINE GMC OXIDOREDUCTASE"/>
    <property type="match status" value="1"/>
</dbReference>
<dbReference type="Pfam" id="PF05199">
    <property type="entry name" value="GMC_oxred_C"/>
    <property type="match status" value="1"/>
</dbReference>
<dbReference type="Pfam" id="PF00732">
    <property type="entry name" value="GMC_oxred_N"/>
    <property type="match status" value="1"/>
</dbReference>
<dbReference type="PIRSF" id="PIRSF000137">
    <property type="entry name" value="Alcohol_oxidase"/>
    <property type="match status" value="1"/>
</dbReference>
<dbReference type="SUPFAM" id="SSF54373">
    <property type="entry name" value="FAD-linked reductases, C-terminal domain"/>
    <property type="match status" value="1"/>
</dbReference>
<dbReference type="SUPFAM" id="SSF51905">
    <property type="entry name" value="FAD/NAD(P)-binding domain"/>
    <property type="match status" value="1"/>
</dbReference>
<dbReference type="PROSITE" id="PS00623">
    <property type="entry name" value="GMC_OXRED_1"/>
    <property type="match status" value="1"/>
</dbReference>
<dbReference type="PROSITE" id="PS00624">
    <property type="entry name" value="GMC_OXRED_2"/>
    <property type="match status" value="1"/>
</dbReference>
<sequence>MQREYDYIIIGAGSAGNVLAARLTEDPGVSVLLLEAGGPDYRLDFRTQMPAALAFPLQGRRYNWAYETEPEPHMDNRRMECGRGKGLGGSSLINGMCYIRGNALDFDHWAKRPGLEDWGYRDVLPYFRKAETRDIGANDYHGGEGPVSVATPKNDNNVLFQAMVDAGVQAGYPRTDDLNGYQQEGFGPMDRTVTPQGRRASTARGYLDMAKPRDSLHIVTHATTDRILFAGKRAVGVHYLVGNSSEGIDAHARREVLVCAGAIASPQLLQRSGVGAPDLLRALDVQLVHDLPGVGQNLQDHLEVYMQYACTKPVSLYPALQWWNQPAIGAEWLFAGTGTGASNQFEAGGFIRTREEFDWPNIQYHFLPVAINYNGSNAVKEHGFQAHVGSMRTPSRGRVHARSRDPRQHPSILFNYQSTDQDWQEFRDAIRITREIIAQPALDPYRGREISPSADCKTDAELDAFVRARAETAYHPSCSCAMGTDDMAVVDGQGRVHGMEGLRVIDASIMPRIITGNLNATTIMIAEKIVDRIRGRAPLPRSTADYYVAGDAPVRR</sequence>
<comment type="function">
    <text evidence="1">Involved in the biosynthesis of the osmoprotectant glycine betaine. Catalyzes the oxidation of choline to betaine aldehyde and betaine aldehyde to glycine betaine at the same rate.</text>
</comment>
<comment type="catalytic activity">
    <reaction evidence="1">
        <text>choline + A = betaine aldehyde + AH2</text>
        <dbReference type="Rhea" id="RHEA:17433"/>
        <dbReference type="ChEBI" id="CHEBI:13193"/>
        <dbReference type="ChEBI" id="CHEBI:15354"/>
        <dbReference type="ChEBI" id="CHEBI:15710"/>
        <dbReference type="ChEBI" id="CHEBI:17499"/>
        <dbReference type="EC" id="1.1.99.1"/>
    </reaction>
</comment>
<comment type="catalytic activity">
    <reaction evidence="1">
        <text>betaine aldehyde + NAD(+) + H2O = glycine betaine + NADH + 2 H(+)</text>
        <dbReference type="Rhea" id="RHEA:15305"/>
        <dbReference type="ChEBI" id="CHEBI:15377"/>
        <dbReference type="ChEBI" id="CHEBI:15378"/>
        <dbReference type="ChEBI" id="CHEBI:15710"/>
        <dbReference type="ChEBI" id="CHEBI:17750"/>
        <dbReference type="ChEBI" id="CHEBI:57540"/>
        <dbReference type="ChEBI" id="CHEBI:57945"/>
        <dbReference type="EC" id="1.2.1.8"/>
    </reaction>
</comment>
<comment type="cofactor">
    <cofactor evidence="1">
        <name>FAD</name>
        <dbReference type="ChEBI" id="CHEBI:57692"/>
    </cofactor>
</comment>
<comment type="pathway">
    <text evidence="1">Amine and polyamine biosynthesis; betaine biosynthesis via choline pathway; betaine aldehyde from choline (cytochrome c reductase route): step 1/1.</text>
</comment>
<comment type="similarity">
    <text evidence="1">Belongs to the GMC oxidoreductase family.</text>
</comment>
<protein>
    <recommendedName>
        <fullName evidence="1">Oxygen-dependent choline dehydrogenase</fullName>
        <shortName evidence="1">CDH</shortName>
        <shortName evidence="1">CHD</shortName>
        <ecNumber evidence="1">1.1.99.1</ecNumber>
    </recommendedName>
    <alternativeName>
        <fullName evidence="1">Betaine aldehyde dehydrogenase</fullName>
        <shortName evidence="1">BADH</shortName>
        <ecNumber evidence="1">1.2.1.8</ecNumber>
    </alternativeName>
</protein>
<name>BETA_XANCB</name>
<feature type="chain" id="PRO_1000133340" description="Oxygen-dependent choline dehydrogenase">
    <location>
        <begin position="1"/>
        <end position="556"/>
    </location>
</feature>
<feature type="active site" description="Proton acceptor" evidence="1">
    <location>
        <position position="475"/>
    </location>
</feature>
<feature type="binding site" evidence="1">
    <location>
        <begin position="6"/>
        <end position="35"/>
    </location>
    <ligand>
        <name>FAD</name>
        <dbReference type="ChEBI" id="CHEBI:57692"/>
    </ligand>
</feature>
<reference key="1">
    <citation type="journal article" date="2008" name="J. Biotechnol.">
        <title>The genome of Xanthomonas campestris pv. campestris B100 and its use for the reconstruction of metabolic pathways involved in xanthan biosynthesis.</title>
        <authorList>
            <person name="Vorhoelter F.-J."/>
            <person name="Schneiker S."/>
            <person name="Goesmann A."/>
            <person name="Krause L."/>
            <person name="Bekel T."/>
            <person name="Kaiser O."/>
            <person name="Linke B."/>
            <person name="Patschkowski T."/>
            <person name="Rueckert C."/>
            <person name="Schmid J."/>
            <person name="Sidhu V.K."/>
            <person name="Sieber V."/>
            <person name="Tauch A."/>
            <person name="Watt S.A."/>
            <person name="Weisshaar B."/>
            <person name="Becker A."/>
            <person name="Niehaus K."/>
            <person name="Puehler A."/>
        </authorList>
    </citation>
    <scope>NUCLEOTIDE SEQUENCE [LARGE SCALE GENOMIC DNA]</scope>
    <source>
        <strain>B100</strain>
    </source>
</reference>
<evidence type="ECO:0000255" key="1">
    <source>
        <dbReference type="HAMAP-Rule" id="MF_00750"/>
    </source>
</evidence>